<protein>
    <recommendedName>
        <fullName evidence="1">Ferredoxin--NADP reductase</fullName>
        <shortName evidence="1">FNR</shortName>
        <shortName evidence="1">Fd-NADP(+) reductase</shortName>
        <ecNumber evidence="1">1.18.1.2</ecNumber>
    </recommendedName>
</protein>
<name>FENR_CHLL2</name>
<dbReference type="EC" id="1.18.1.2" evidence="1"/>
<dbReference type="EMBL" id="CP001097">
    <property type="protein sequence ID" value="ACD90760.1"/>
    <property type="molecule type" value="Genomic_DNA"/>
</dbReference>
<dbReference type="RefSeq" id="WP_012466633.1">
    <property type="nucleotide sequence ID" value="NC_010803.1"/>
</dbReference>
<dbReference type="SMR" id="B3EEF0"/>
<dbReference type="STRING" id="290315.Clim_1719"/>
<dbReference type="KEGG" id="cli:Clim_1719"/>
<dbReference type="eggNOG" id="COG0492">
    <property type="taxonomic scope" value="Bacteria"/>
</dbReference>
<dbReference type="HOGENOM" id="CLU_031864_5_5_10"/>
<dbReference type="OrthoDB" id="9806179at2"/>
<dbReference type="Proteomes" id="UP000008841">
    <property type="component" value="Chromosome"/>
</dbReference>
<dbReference type="GO" id="GO:0004324">
    <property type="term" value="F:ferredoxin-NADP+ reductase activity"/>
    <property type="evidence" value="ECO:0007669"/>
    <property type="project" value="UniProtKB-UniRule"/>
</dbReference>
<dbReference type="GO" id="GO:0050660">
    <property type="term" value="F:flavin adenine dinucleotide binding"/>
    <property type="evidence" value="ECO:0007669"/>
    <property type="project" value="UniProtKB-UniRule"/>
</dbReference>
<dbReference type="GO" id="GO:0050661">
    <property type="term" value="F:NADP binding"/>
    <property type="evidence" value="ECO:0007669"/>
    <property type="project" value="UniProtKB-UniRule"/>
</dbReference>
<dbReference type="Gene3D" id="3.50.50.60">
    <property type="entry name" value="FAD/NAD(P)-binding domain"/>
    <property type="match status" value="2"/>
</dbReference>
<dbReference type="HAMAP" id="MF_01685">
    <property type="entry name" value="FENR2"/>
    <property type="match status" value="1"/>
</dbReference>
<dbReference type="InterPro" id="IPR036188">
    <property type="entry name" value="FAD/NAD-bd_sf"/>
</dbReference>
<dbReference type="InterPro" id="IPR023753">
    <property type="entry name" value="FAD/NAD-binding_dom"/>
</dbReference>
<dbReference type="InterPro" id="IPR022890">
    <property type="entry name" value="Fd--NADP_Rdtase_type_2"/>
</dbReference>
<dbReference type="InterPro" id="IPR050097">
    <property type="entry name" value="Ferredoxin-NADP_redctase_2"/>
</dbReference>
<dbReference type="PANTHER" id="PTHR48105">
    <property type="entry name" value="THIOREDOXIN REDUCTASE 1-RELATED-RELATED"/>
    <property type="match status" value="1"/>
</dbReference>
<dbReference type="Pfam" id="PF07992">
    <property type="entry name" value="Pyr_redox_2"/>
    <property type="match status" value="1"/>
</dbReference>
<dbReference type="PRINTS" id="PR00368">
    <property type="entry name" value="FADPNR"/>
</dbReference>
<dbReference type="PRINTS" id="PR00469">
    <property type="entry name" value="PNDRDTASEII"/>
</dbReference>
<dbReference type="SUPFAM" id="SSF51905">
    <property type="entry name" value="FAD/NAD(P)-binding domain"/>
    <property type="match status" value="1"/>
</dbReference>
<keyword id="KW-0274">FAD</keyword>
<keyword id="KW-0285">Flavoprotein</keyword>
<keyword id="KW-0521">NADP</keyword>
<keyword id="KW-0560">Oxidoreductase</keyword>
<evidence type="ECO:0000255" key="1">
    <source>
        <dbReference type="HAMAP-Rule" id="MF_01685"/>
    </source>
</evidence>
<reference key="1">
    <citation type="submission" date="2008-05" db="EMBL/GenBank/DDBJ databases">
        <title>Complete sequence of Chlorobium limicola DSM 245.</title>
        <authorList>
            <consortium name="US DOE Joint Genome Institute"/>
            <person name="Lucas S."/>
            <person name="Copeland A."/>
            <person name="Lapidus A."/>
            <person name="Glavina del Rio T."/>
            <person name="Dalin E."/>
            <person name="Tice H."/>
            <person name="Bruce D."/>
            <person name="Goodwin L."/>
            <person name="Pitluck S."/>
            <person name="Schmutz J."/>
            <person name="Larimer F."/>
            <person name="Land M."/>
            <person name="Hauser L."/>
            <person name="Kyrpides N."/>
            <person name="Ovchinnikova G."/>
            <person name="Zhao F."/>
            <person name="Li T."/>
            <person name="Liu Z."/>
            <person name="Overmann J."/>
            <person name="Bryant D.A."/>
            <person name="Richardson P."/>
        </authorList>
    </citation>
    <scope>NUCLEOTIDE SEQUENCE [LARGE SCALE GENOMIC DNA]</scope>
    <source>
        <strain>DSM 245 / NBRC 103803 / 6330</strain>
    </source>
</reference>
<feature type="chain" id="PRO_0000364818" description="Ferredoxin--NADP reductase">
    <location>
        <begin position="1"/>
        <end position="350"/>
    </location>
</feature>
<feature type="binding site" evidence="1">
    <location>
        <position position="25"/>
    </location>
    <ligand>
        <name>FAD</name>
        <dbReference type="ChEBI" id="CHEBI:57692"/>
    </ligand>
</feature>
<feature type="binding site" evidence="1">
    <location>
        <position position="44"/>
    </location>
    <ligand>
        <name>FAD</name>
        <dbReference type="ChEBI" id="CHEBI:57692"/>
    </ligand>
</feature>
<feature type="binding site" evidence="1">
    <location>
        <position position="52"/>
    </location>
    <ligand>
        <name>FAD</name>
        <dbReference type="ChEBI" id="CHEBI:57692"/>
    </ligand>
</feature>
<feature type="binding site" evidence="1">
    <location>
        <position position="57"/>
    </location>
    <ligand>
        <name>FAD</name>
        <dbReference type="ChEBI" id="CHEBI:57692"/>
    </ligand>
</feature>
<feature type="binding site" evidence="1">
    <location>
        <position position="97"/>
    </location>
    <ligand>
        <name>FAD</name>
        <dbReference type="ChEBI" id="CHEBI:57692"/>
    </ligand>
</feature>
<feature type="binding site" evidence="1">
    <location>
        <position position="132"/>
    </location>
    <ligand>
        <name>FAD</name>
        <dbReference type="ChEBI" id="CHEBI:57692"/>
    </ligand>
</feature>
<feature type="binding site" evidence="1">
    <location>
        <position position="298"/>
    </location>
    <ligand>
        <name>FAD</name>
        <dbReference type="ChEBI" id="CHEBI:57692"/>
    </ligand>
</feature>
<feature type="binding site" evidence="1">
    <location>
        <position position="339"/>
    </location>
    <ligand>
        <name>FAD</name>
        <dbReference type="ChEBI" id="CHEBI:57692"/>
    </ligand>
</feature>
<organism>
    <name type="scientific">Chlorobium limicola (strain DSM 245 / NBRC 103803 / 6330)</name>
    <dbReference type="NCBI Taxonomy" id="290315"/>
    <lineage>
        <taxon>Bacteria</taxon>
        <taxon>Pseudomonadati</taxon>
        <taxon>Chlorobiota</taxon>
        <taxon>Chlorobiia</taxon>
        <taxon>Chlorobiales</taxon>
        <taxon>Chlorobiaceae</taxon>
        <taxon>Chlorobium/Pelodictyon group</taxon>
        <taxon>Chlorobium</taxon>
    </lineage>
</organism>
<proteinExistence type="inferred from homology"/>
<gene>
    <name type="ordered locus">Clim_1719</name>
</gene>
<comment type="catalytic activity">
    <reaction evidence="1">
        <text>2 reduced [2Fe-2S]-[ferredoxin] + NADP(+) + H(+) = 2 oxidized [2Fe-2S]-[ferredoxin] + NADPH</text>
        <dbReference type="Rhea" id="RHEA:20125"/>
        <dbReference type="Rhea" id="RHEA-COMP:10000"/>
        <dbReference type="Rhea" id="RHEA-COMP:10001"/>
        <dbReference type="ChEBI" id="CHEBI:15378"/>
        <dbReference type="ChEBI" id="CHEBI:33737"/>
        <dbReference type="ChEBI" id="CHEBI:33738"/>
        <dbReference type="ChEBI" id="CHEBI:57783"/>
        <dbReference type="ChEBI" id="CHEBI:58349"/>
        <dbReference type="EC" id="1.18.1.2"/>
    </reaction>
</comment>
<comment type="cofactor">
    <cofactor evidence="1">
        <name>FAD</name>
        <dbReference type="ChEBI" id="CHEBI:57692"/>
    </cofactor>
    <text evidence="1">Binds 1 FAD per subunit.</text>
</comment>
<comment type="subunit">
    <text evidence="1">Homodimer.</text>
</comment>
<comment type="similarity">
    <text evidence="1">Belongs to the ferredoxin--NADP reductase type 2 family.</text>
</comment>
<sequence length="350" mass="38197">MTLNKVYYSGGEEIRDLTIVGGGPTGIFAAFQCGMNNITSRIIESMPQLGGQLAALYPEKHIYDVAGFHEVPAAGLVDSLWKQAERYHPEINLGEAVTRYRKLDDGSFETTTKSGKVFLSRALLLAAGLGAFTPRTLPQLGCVDHLEGRSIFYAVKNIRDFAGKKVVIVGGGDSALDWAVGLLDAAEHVTLVHRMHEFQGHGKTAREVDEARDKGVIDVYMDTEVTAIETAEGGMKNVTLLRKNGASVVLEADRLLILIGFRSNLGPLAEWDLELVDNALVVDSHMKTSVDGLYAAGDIAWYPGKLKIIQTGLSDAAMAVRHSLNYIRPGEKIRHTFSSVKMAKQKKNEQ</sequence>
<accession>B3EEF0</accession>